<keyword id="KW-0067">ATP-binding</keyword>
<keyword id="KW-0436">Ligase</keyword>
<keyword id="KW-0460">Magnesium</keyword>
<keyword id="KW-0464">Manganese</keyword>
<keyword id="KW-0479">Metal-binding</keyword>
<keyword id="KW-0547">Nucleotide-binding</keyword>
<keyword id="KW-0648">Protein biosynthesis</keyword>
<proteinExistence type="inferred from homology"/>
<comment type="function">
    <text evidence="1">An L-glutamate ligase that catalyzes the ATP-dependent post-translational addition of glutamate residues to the C-terminus of ribosomal protein bS6 (RpsF). Is also able to catalyze the synthesis of poly-alpha-glutamate in vitro, via ATP hydrolysis from unprotected glutamate as substrate. The number of glutamate residues added to either RpsF or to poly-alpha-glutamate changes with pH.</text>
</comment>
<comment type="cofactor">
    <cofactor evidence="1">
        <name>Mg(2+)</name>
        <dbReference type="ChEBI" id="CHEBI:18420"/>
    </cofactor>
    <cofactor evidence="1">
        <name>Mn(2+)</name>
        <dbReference type="ChEBI" id="CHEBI:29035"/>
    </cofactor>
    <text evidence="1">Binds 2 magnesium or manganese ions per subunit.</text>
</comment>
<comment type="similarity">
    <text evidence="1">Belongs to the RimK family.</text>
</comment>
<sequence length="300" mass="32436">MKIAILSRDGTLYSCKRLREAAIQRGHLVEILDPLSCYMNINPAASSIHYKGRKLPHFDAVIPRIGTAITFYGTAALRQFEMLGSYPLNESVAIARARDKLRSMQLLARQGIDLPVTGIAHSPDDTSDLIDMVGGAPLVVKLVEGTQGIGVVLAETRQAAESVIDAFRGLNAHILVQEYIKEAQGCDIRCLVVGDEVVAAIERRAKEGDFRSNLHRGGAASVASITPQEREIAIKAARTMALDVAGVDILRANRGPLVMEVNASPGLEGIEKTTGIDIAGKMIRWIERHATTEYCLKTGG</sequence>
<evidence type="ECO:0000255" key="1">
    <source>
        <dbReference type="HAMAP-Rule" id="MF_01552"/>
    </source>
</evidence>
<organism>
    <name type="scientific">Escherichia coli O157:H7 (strain EC4115 / EHEC)</name>
    <dbReference type="NCBI Taxonomy" id="444450"/>
    <lineage>
        <taxon>Bacteria</taxon>
        <taxon>Pseudomonadati</taxon>
        <taxon>Pseudomonadota</taxon>
        <taxon>Gammaproteobacteria</taxon>
        <taxon>Enterobacterales</taxon>
        <taxon>Enterobacteriaceae</taxon>
        <taxon>Escherichia</taxon>
    </lineage>
</organism>
<name>RIMK_ECO5E</name>
<reference key="1">
    <citation type="journal article" date="2011" name="Proc. Natl. Acad. Sci. U.S.A.">
        <title>Genomic anatomy of Escherichia coli O157:H7 outbreaks.</title>
        <authorList>
            <person name="Eppinger M."/>
            <person name="Mammel M.K."/>
            <person name="Leclerc J.E."/>
            <person name="Ravel J."/>
            <person name="Cebula T.A."/>
        </authorList>
    </citation>
    <scope>NUCLEOTIDE SEQUENCE [LARGE SCALE GENOMIC DNA]</scope>
    <source>
        <strain>EC4115 / EHEC</strain>
    </source>
</reference>
<protein>
    <recommendedName>
        <fullName evidence="1">Ribosomal protein bS6--L-glutamate ligase</fullName>
        <ecNumber evidence="1">6.3.2.-</ecNumber>
    </recommendedName>
    <alternativeName>
        <fullName evidence="1">Poly-alpha-glutamate synthase</fullName>
    </alternativeName>
    <alternativeName>
        <fullName evidence="1">Ribosomal protein bS6 modification protein</fullName>
    </alternativeName>
</protein>
<feature type="chain" id="PRO_1000194365" description="Ribosomal protein bS6--L-glutamate ligase">
    <location>
        <begin position="1"/>
        <end position="300"/>
    </location>
</feature>
<feature type="domain" description="ATP-grasp" evidence="1">
    <location>
        <begin position="104"/>
        <end position="287"/>
    </location>
</feature>
<feature type="binding site" evidence="1">
    <location>
        <position position="141"/>
    </location>
    <ligand>
        <name>ATP</name>
        <dbReference type="ChEBI" id="CHEBI:30616"/>
    </ligand>
</feature>
<feature type="binding site" evidence="1">
    <location>
        <begin position="178"/>
        <end position="179"/>
    </location>
    <ligand>
        <name>ATP</name>
        <dbReference type="ChEBI" id="CHEBI:30616"/>
    </ligand>
</feature>
<feature type="binding site" evidence="1">
    <location>
        <position position="187"/>
    </location>
    <ligand>
        <name>ATP</name>
        <dbReference type="ChEBI" id="CHEBI:30616"/>
    </ligand>
</feature>
<feature type="binding site" evidence="1">
    <location>
        <begin position="211"/>
        <end position="213"/>
    </location>
    <ligand>
        <name>ATP</name>
        <dbReference type="ChEBI" id="CHEBI:30616"/>
    </ligand>
</feature>
<feature type="binding site" evidence="1">
    <location>
        <position position="248"/>
    </location>
    <ligand>
        <name>Mg(2+)</name>
        <dbReference type="ChEBI" id="CHEBI:18420"/>
        <label>1</label>
    </ligand>
</feature>
<feature type="binding site" evidence="1">
    <location>
        <position position="248"/>
    </location>
    <ligand>
        <name>Mn(2+)</name>
        <dbReference type="ChEBI" id="CHEBI:29035"/>
        <label>1</label>
    </ligand>
</feature>
<feature type="binding site" evidence="1">
    <location>
        <position position="260"/>
    </location>
    <ligand>
        <name>Mg(2+)</name>
        <dbReference type="ChEBI" id="CHEBI:18420"/>
        <label>1</label>
    </ligand>
</feature>
<feature type="binding site" evidence="1">
    <location>
        <position position="260"/>
    </location>
    <ligand>
        <name>Mg(2+)</name>
        <dbReference type="ChEBI" id="CHEBI:18420"/>
        <label>2</label>
    </ligand>
</feature>
<feature type="binding site" evidence="1">
    <location>
        <position position="260"/>
    </location>
    <ligand>
        <name>Mn(2+)</name>
        <dbReference type="ChEBI" id="CHEBI:29035"/>
        <label>1</label>
    </ligand>
</feature>
<feature type="binding site" evidence="1">
    <location>
        <position position="260"/>
    </location>
    <ligand>
        <name>Mn(2+)</name>
        <dbReference type="ChEBI" id="CHEBI:29035"/>
        <label>2</label>
    </ligand>
</feature>
<feature type="binding site" evidence="1">
    <location>
        <position position="262"/>
    </location>
    <ligand>
        <name>Mg(2+)</name>
        <dbReference type="ChEBI" id="CHEBI:18420"/>
        <label>2</label>
    </ligand>
</feature>
<feature type="binding site" evidence="1">
    <location>
        <position position="262"/>
    </location>
    <ligand>
        <name>Mn(2+)</name>
        <dbReference type="ChEBI" id="CHEBI:29035"/>
        <label>2</label>
    </ligand>
</feature>
<gene>
    <name evidence="1" type="primary">rimK</name>
    <name type="ordered locus">ECH74115_1006</name>
</gene>
<accession>B5YSE3</accession>
<dbReference type="EC" id="6.3.2.-" evidence="1"/>
<dbReference type="EMBL" id="CP001164">
    <property type="protein sequence ID" value="ACI35572.1"/>
    <property type="molecule type" value="Genomic_DNA"/>
</dbReference>
<dbReference type="RefSeq" id="WP_000684321.1">
    <property type="nucleotide sequence ID" value="NC_011353.1"/>
</dbReference>
<dbReference type="SMR" id="B5YSE3"/>
<dbReference type="GeneID" id="93776570"/>
<dbReference type="KEGG" id="ecf:ECH74115_1006"/>
<dbReference type="HOGENOM" id="CLU_054353_0_1_6"/>
<dbReference type="GO" id="GO:0005737">
    <property type="term" value="C:cytoplasm"/>
    <property type="evidence" value="ECO:0007669"/>
    <property type="project" value="TreeGrafter"/>
</dbReference>
<dbReference type="GO" id="GO:0005524">
    <property type="term" value="F:ATP binding"/>
    <property type="evidence" value="ECO:0007669"/>
    <property type="project" value="UniProtKB-UniRule"/>
</dbReference>
<dbReference type="GO" id="GO:0046872">
    <property type="term" value="F:metal ion binding"/>
    <property type="evidence" value="ECO:0007669"/>
    <property type="project" value="UniProtKB-KW"/>
</dbReference>
<dbReference type="GO" id="GO:0018169">
    <property type="term" value="F:ribosomal S6-glutamic acid ligase activity"/>
    <property type="evidence" value="ECO:0007669"/>
    <property type="project" value="UniProtKB-UniRule"/>
</dbReference>
<dbReference type="GO" id="GO:0036211">
    <property type="term" value="P:protein modification process"/>
    <property type="evidence" value="ECO:0007669"/>
    <property type="project" value="InterPro"/>
</dbReference>
<dbReference type="GO" id="GO:0009432">
    <property type="term" value="P:SOS response"/>
    <property type="evidence" value="ECO:0007669"/>
    <property type="project" value="TreeGrafter"/>
</dbReference>
<dbReference type="GO" id="GO:0006412">
    <property type="term" value="P:translation"/>
    <property type="evidence" value="ECO:0007669"/>
    <property type="project" value="UniProtKB-KW"/>
</dbReference>
<dbReference type="FunFam" id="3.40.50.20:FF:000004">
    <property type="entry name" value="Probable alpha-L-glutamate ligase"/>
    <property type="match status" value="1"/>
</dbReference>
<dbReference type="FunFam" id="3.30.1490.20:FF:000005">
    <property type="entry name" value="Probable alpha-L-glutamate ligase 1"/>
    <property type="match status" value="1"/>
</dbReference>
<dbReference type="FunFam" id="3.30.470.20:FF:000016">
    <property type="entry name" value="Ribosomal protein S6--L-glutamate ligase"/>
    <property type="match status" value="1"/>
</dbReference>
<dbReference type="Gene3D" id="3.40.50.20">
    <property type="match status" value="1"/>
</dbReference>
<dbReference type="Gene3D" id="3.30.1490.20">
    <property type="entry name" value="ATP-grasp fold, A domain"/>
    <property type="match status" value="1"/>
</dbReference>
<dbReference type="Gene3D" id="3.30.470.20">
    <property type="entry name" value="ATP-grasp fold, B domain"/>
    <property type="match status" value="1"/>
</dbReference>
<dbReference type="HAMAP" id="MF_01552">
    <property type="entry name" value="RimK"/>
    <property type="match status" value="1"/>
</dbReference>
<dbReference type="InterPro" id="IPR011761">
    <property type="entry name" value="ATP-grasp"/>
</dbReference>
<dbReference type="InterPro" id="IPR013651">
    <property type="entry name" value="ATP-grasp_RimK-type"/>
</dbReference>
<dbReference type="InterPro" id="IPR013815">
    <property type="entry name" value="ATP_grasp_subdomain_1"/>
</dbReference>
<dbReference type="InterPro" id="IPR023533">
    <property type="entry name" value="RimK"/>
</dbReference>
<dbReference type="InterPro" id="IPR041107">
    <property type="entry name" value="Rimk_N"/>
</dbReference>
<dbReference type="InterPro" id="IPR004666">
    <property type="entry name" value="Rp_bS6_RimK/Lys_biosynth_LsyX"/>
</dbReference>
<dbReference type="NCBIfam" id="NF007764">
    <property type="entry name" value="PRK10446.1"/>
    <property type="match status" value="1"/>
</dbReference>
<dbReference type="NCBIfam" id="TIGR00768">
    <property type="entry name" value="rimK_fam"/>
    <property type="match status" value="1"/>
</dbReference>
<dbReference type="PANTHER" id="PTHR21621:SF7">
    <property type="entry name" value="RIBOSOMAL PROTEIN BS6--L-GLUTAMATE LIGASE"/>
    <property type="match status" value="1"/>
</dbReference>
<dbReference type="PANTHER" id="PTHR21621">
    <property type="entry name" value="RIBOSOMAL PROTEIN S6 MODIFICATION PROTEIN"/>
    <property type="match status" value="1"/>
</dbReference>
<dbReference type="Pfam" id="PF08443">
    <property type="entry name" value="RimK"/>
    <property type="match status" value="1"/>
</dbReference>
<dbReference type="Pfam" id="PF18030">
    <property type="entry name" value="Rimk_N"/>
    <property type="match status" value="1"/>
</dbReference>
<dbReference type="SUPFAM" id="SSF56059">
    <property type="entry name" value="Glutathione synthetase ATP-binding domain-like"/>
    <property type="match status" value="1"/>
</dbReference>
<dbReference type="PROSITE" id="PS50975">
    <property type="entry name" value="ATP_GRASP"/>
    <property type="match status" value="1"/>
</dbReference>